<name>STX6_CHICK</name>
<dbReference type="EMBL" id="AJ719915">
    <property type="protein sequence ID" value="CAG31574.1"/>
    <property type="molecule type" value="mRNA"/>
</dbReference>
<dbReference type="RefSeq" id="NP_001006531.1">
    <property type="nucleotide sequence ID" value="NM_001006531.1"/>
</dbReference>
<dbReference type="SMR" id="Q5ZL19"/>
<dbReference type="FunCoup" id="Q5ZL19">
    <property type="interactions" value="1487"/>
</dbReference>
<dbReference type="STRING" id="9031.ENSGALP00000006160"/>
<dbReference type="PaxDb" id="9031-ENSGALP00000006160"/>
<dbReference type="Ensembl" id="ENSGALT00010023331.1">
    <property type="protein sequence ID" value="ENSGALP00010013484.1"/>
    <property type="gene ID" value="ENSGALG00010009765.1"/>
</dbReference>
<dbReference type="GeneID" id="424413"/>
<dbReference type="KEGG" id="gga:424413"/>
<dbReference type="CTD" id="8677"/>
<dbReference type="VEuPathDB" id="HostDB:geneid_424413"/>
<dbReference type="eggNOG" id="KOG3202">
    <property type="taxonomic scope" value="Eukaryota"/>
</dbReference>
<dbReference type="GeneTree" id="ENSGT00940000157639"/>
<dbReference type="HOGENOM" id="CLU_061883_1_0_1"/>
<dbReference type="InParanoid" id="Q5ZL19"/>
<dbReference type="OMA" id="EHDPYRF"/>
<dbReference type="OrthoDB" id="546861at2759"/>
<dbReference type="PhylomeDB" id="Q5ZL19"/>
<dbReference type="Reactome" id="R-GGA-6811438">
    <property type="pathway name" value="Intra-Golgi traffic"/>
</dbReference>
<dbReference type="Reactome" id="R-GGA-6811440">
    <property type="pathway name" value="Retrograde transport at the Trans-Golgi-Network"/>
</dbReference>
<dbReference type="PRO" id="PR:Q5ZL19"/>
<dbReference type="Proteomes" id="UP000000539">
    <property type="component" value="Chromosome 8"/>
</dbReference>
<dbReference type="Bgee" id="ENSGALG00000003880">
    <property type="expression patterns" value="Expressed in spleen and 13 other cell types or tissues"/>
</dbReference>
<dbReference type="GO" id="GO:0005829">
    <property type="term" value="C:cytosol"/>
    <property type="evidence" value="ECO:0007669"/>
    <property type="project" value="Ensembl"/>
</dbReference>
<dbReference type="GO" id="GO:0005769">
    <property type="term" value="C:early endosome"/>
    <property type="evidence" value="ECO:0000250"/>
    <property type="project" value="AgBase"/>
</dbReference>
<dbReference type="GO" id="GO:0012505">
    <property type="term" value="C:endomembrane system"/>
    <property type="evidence" value="ECO:0000318"/>
    <property type="project" value="GO_Central"/>
</dbReference>
<dbReference type="GO" id="GO:0000139">
    <property type="term" value="C:Golgi membrane"/>
    <property type="evidence" value="ECO:0007669"/>
    <property type="project" value="UniProtKB-SubCell"/>
</dbReference>
<dbReference type="GO" id="GO:0005654">
    <property type="term" value="C:nucleoplasm"/>
    <property type="evidence" value="ECO:0007669"/>
    <property type="project" value="Ensembl"/>
</dbReference>
<dbReference type="GO" id="GO:0048471">
    <property type="term" value="C:perinuclear region of cytoplasm"/>
    <property type="evidence" value="ECO:0000250"/>
    <property type="project" value="AgBase"/>
</dbReference>
<dbReference type="GO" id="GO:0045335">
    <property type="term" value="C:phagocytic vesicle"/>
    <property type="evidence" value="ECO:0007669"/>
    <property type="project" value="Ensembl"/>
</dbReference>
<dbReference type="GO" id="GO:0055038">
    <property type="term" value="C:recycling endosome membrane"/>
    <property type="evidence" value="ECO:0007669"/>
    <property type="project" value="UniProtKB-SubCell"/>
</dbReference>
<dbReference type="GO" id="GO:0031201">
    <property type="term" value="C:SNARE complex"/>
    <property type="evidence" value="ECO:0000318"/>
    <property type="project" value="GO_Central"/>
</dbReference>
<dbReference type="GO" id="GO:0030672">
    <property type="term" value="C:synaptic vesicle membrane"/>
    <property type="evidence" value="ECO:0000318"/>
    <property type="project" value="GO_Central"/>
</dbReference>
<dbReference type="GO" id="GO:0032588">
    <property type="term" value="C:trans-Golgi network membrane"/>
    <property type="evidence" value="ECO:0007669"/>
    <property type="project" value="Ensembl"/>
</dbReference>
<dbReference type="GO" id="GO:0005484">
    <property type="term" value="F:SNAP receptor activity"/>
    <property type="evidence" value="ECO:0000318"/>
    <property type="project" value="GO_Central"/>
</dbReference>
<dbReference type="GO" id="GO:0000149">
    <property type="term" value="F:SNARE binding"/>
    <property type="evidence" value="ECO:0000318"/>
    <property type="project" value="GO_Central"/>
</dbReference>
<dbReference type="GO" id="GO:0019905">
    <property type="term" value="F:syntaxin binding"/>
    <property type="evidence" value="ECO:0007669"/>
    <property type="project" value="Ensembl"/>
</dbReference>
<dbReference type="GO" id="GO:0032456">
    <property type="term" value="P:endocytic recycling"/>
    <property type="evidence" value="ECO:0007669"/>
    <property type="project" value="Ensembl"/>
</dbReference>
<dbReference type="GO" id="GO:0007032">
    <property type="term" value="P:endosome organization"/>
    <property type="evidence" value="ECO:0000250"/>
    <property type="project" value="AgBase"/>
</dbReference>
<dbReference type="GO" id="GO:0048193">
    <property type="term" value="P:Golgi vesicle transport"/>
    <property type="evidence" value="ECO:0007669"/>
    <property type="project" value="InterPro"/>
</dbReference>
<dbReference type="GO" id="GO:0006886">
    <property type="term" value="P:intracellular protein transport"/>
    <property type="evidence" value="ECO:0000318"/>
    <property type="project" value="GO_Central"/>
</dbReference>
<dbReference type="GO" id="GO:0032880">
    <property type="term" value="P:regulation of protein localization"/>
    <property type="evidence" value="ECO:0007669"/>
    <property type="project" value="Ensembl"/>
</dbReference>
<dbReference type="GO" id="GO:0042147">
    <property type="term" value="P:retrograde transport, endosome to Golgi"/>
    <property type="evidence" value="ECO:0000318"/>
    <property type="project" value="GO_Central"/>
</dbReference>
<dbReference type="GO" id="GO:0048278">
    <property type="term" value="P:vesicle docking"/>
    <property type="evidence" value="ECO:0000318"/>
    <property type="project" value="GO_Central"/>
</dbReference>
<dbReference type="GO" id="GO:0006906">
    <property type="term" value="P:vesicle fusion"/>
    <property type="evidence" value="ECO:0000250"/>
    <property type="project" value="AgBase"/>
</dbReference>
<dbReference type="CDD" id="cd21447">
    <property type="entry name" value="SNARE_NTD_STX6"/>
    <property type="match status" value="1"/>
</dbReference>
<dbReference type="CDD" id="cd15851">
    <property type="entry name" value="SNARE_Syntaxin6"/>
    <property type="match status" value="1"/>
</dbReference>
<dbReference type="FunFam" id="1.20.5.110:FF:000006">
    <property type="entry name" value="Syntaxin 6"/>
    <property type="match status" value="1"/>
</dbReference>
<dbReference type="FunFam" id="1.20.58.90:FF:000002">
    <property type="entry name" value="syntaxin-6 isoform X1"/>
    <property type="match status" value="1"/>
</dbReference>
<dbReference type="Gene3D" id="1.20.5.110">
    <property type="match status" value="1"/>
</dbReference>
<dbReference type="Gene3D" id="1.20.58.90">
    <property type="match status" value="1"/>
</dbReference>
<dbReference type="InterPro" id="IPR010989">
    <property type="entry name" value="SNARE"/>
</dbReference>
<dbReference type="InterPro" id="IPR015260">
    <property type="entry name" value="Syntaxin-6/10/61_N"/>
</dbReference>
<dbReference type="InterPro" id="IPR006012">
    <property type="entry name" value="Syntaxin/epimorphin_CS"/>
</dbReference>
<dbReference type="InterPro" id="IPR000727">
    <property type="entry name" value="T_SNARE_dom"/>
</dbReference>
<dbReference type="PANTHER" id="PTHR12791">
    <property type="entry name" value="GOLGI SNARE BET1-RELATED"/>
    <property type="match status" value="1"/>
</dbReference>
<dbReference type="Pfam" id="PF05739">
    <property type="entry name" value="SNARE"/>
    <property type="match status" value="1"/>
</dbReference>
<dbReference type="Pfam" id="PF09177">
    <property type="entry name" value="STX6_10_61_N"/>
    <property type="match status" value="1"/>
</dbReference>
<dbReference type="SMART" id="SM00397">
    <property type="entry name" value="t_SNARE"/>
    <property type="match status" value="1"/>
</dbReference>
<dbReference type="SUPFAM" id="SSF58038">
    <property type="entry name" value="SNARE fusion complex"/>
    <property type="match status" value="1"/>
</dbReference>
<dbReference type="SUPFAM" id="SSF47661">
    <property type="entry name" value="t-snare proteins"/>
    <property type="match status" value="1"/>
</dbReference>
<dbReference type="PROSITE" id="PS00914">
    <property type="entry name" value="SYNTAXIN"/>
    <property type="match status" value="1"/>
</dbReference>
<dbReference type="PROSITE" id="PS50192">
    <property type="entry name" value="T_SNARE"/>
    <property type="match status" value="1"/>
</dbReference>
<evidence type="ECO:0000250" key="1">
    <source>
        <dbReference type="UniProtKB" id="O43752"/>
    </source>
</evidence>
<evidence type="ECO:0000250" key="2">
    <source>
        <dbReference type="UniProtKB" id="Q63635"/>
    </source>
</evidence>
<evidence type="ECO:0000255" key="3"/>
<evidence type="ECO:0000255" key="4">
    <source>
        <dbReference type="PROSITE-ProRule" id="PRU00202"/>
    </source>
</evidence>
<evidence type="ECO:0000256" key="5">
    <source>
        <dbReference type="SAM" id="MobiDB-lite"/>
    </source>
</evidence>
<evidence type="ECO:0000305" key="6"/>
<protein>
    <recommendedName>
        <fullName>Syntaxin-6</fullName>
    </recommendedName>
</protein>
<organism>
    <name type="scientific">Gallus gallus</name>
    <name type="common">Chicken</name>
    <dbReference type="NCBI Taxonomy" id="9031"/>
    <lineage>
        <taxon>Eukaryota</taxon>
        <taxon>Metazoa</taxon>
        <taxon>Chordata</taxon>
        <taxon>Craniata</taxon>
        <taxon>Vertebrata</taxon>
        <taxon>Euteleostomi</taxon>
        <taxon>Archelosauria</taxon>
        <taxon>Archosauria</taxon>
        <taxon>Dinosauria</taxon>
        <taxon>Saurischia</taxon>
        <taxon>Theropoda</taxon>
        <taxon>Coelurosauria</taxon>
        <taxon>Aves</taxon>
        <taxon>Neognathae</taxon>
        <taxon>Galloanserae</taxon>
        <taxon>Galliformes</taxon>
        <taxon>Phasianidae</taxon>
        <taxon>Phasianinae</taxon>
        <taxon>Gallus</taxon>
    </lineage>
</organism>
<keyword id="KW-0175">Coiled coil</keyword>
<keyword id="KW-0967">Endosome</keyword>
<keyword id="KW-0333">Golgi apparatus</keyword>
<keyword id="KW-0472">Membrane</keyword>
<keyword id="KW-0653">Protein transport</keyword>
<keyword id="KW-1185">Reference proteome</keyword>
<keyword id="KW-0812">Transmembrane</keyword>
<keyword id="KW-1133">Transmembrane helix</keyword>
<keyword id="KW-0813">Transport</keyword>
<accession>Q5ZL19</accession>
<proteinExistence type="evidence at transcript level"/>
<comment type="function">
    <text evidence="2">SNARE promoting movement of transport vesicles to target membranes. Targets endosomes to the trans-Golgi network, and may therefore function in retrograde trafficking. Together with SNARE STX12, promotes movement of vesicles from endosomes to the cell membrane, and may therefore function in the endocytic recycling pathway.</text>
</comment>
<comment type="subcellular location">
    <subcellularLocation>
        <location evidence="1">Golgi apparatus membrane</location>
        <topology evidence="6">Single-pass type IV membrane protein</topology>
    </subcellularLocation>
    <subcellularLocation>
        <location evidence="2">Golgi apparatus</location>
        <location evidence="2">trans-Golgi network membrane</location>
        <topology evidence="3">Single-pass type IV membrane protein</topology>
    </subcellularLocation>
    <subcellularLocation>
        <location evidence="2">Recycling endosome membrane</location>
        <topology evidence="3">Single-pass type IV membrane protein</topology>
    </subcellularLocation>
</comment>
<comment type="similarity">
    <text evidence="6">Belongs to the syntaxin family.</text>
</comment>
<gene>
    <name type="primary">STX6</name>
    <name type="ORF">RCJMB04_8d16</name>
</gene>
<sequence>MSMEDPFFVVKGEVQKAVNTAQGLFQRWTELLQDPSIATREEIDWTTNELRNNLRSIEWDLEDLDETISIVEANPRKFNLDATELGIRKSFITSTRQVVREMKDQMSNSSMQALAERKNRQALLGESSSQSWSSGPDKYSRLDRELQLANSHFIEEQQAQQQLIVEQQDEQLELVSGSIGVLKNMSQRIGGELEEQAVMLDDFSHELDSTHSRLDNVMKKLAKVSHMTSDRRQWCAIIVLFVILLVVLVLFLVL</sequence>
<reference key="1">
    <citation type="journal article" date="2005" name="Genome Biol.">
        <title>Full-length cDNAs from chicken bursal lymphocytes to facilitate gene function analysis.</title>
        <authorList>
            <person name="Caldwell R.B."/>
            <person name="Kierzek A.M."/>
            <person name="Arakawa H."/>
            <person name="Bezzubov Y."/>
            <person name="Zaim J."/>
            <person name="Fiedler P."/>
            <person name="Kutter S."/>
            <person name="Blagodatski A."/>
            <person name="Kostovska D."/>
            <person name="Koter M."/>
            <person name="Plachy J."/>
            <person name="Carninci P."/>
            <person name="Hayashizaki Y."/>
            <person name="Buerstedde J.-M."/>
        </authorList>
    </citation>
    <scope>NUCLEOTIDE SEQUENCE [LARGE SCALE MRNA]</scope>
    <source>
        <strain>CB</strain>
        <tissue>Bursa of Fabricius</tissue>
    </source>
</reference>
<feature type="chain" id="PRO_0000210212" description="Syntaxin-6">
    <location>
        <begin position="1"/>
        <end position="254"/>
    </location>
</feature>
<feature type="topological domain" description="Cytoplasmic" evidence="3">
    <location>
        <begin position="1"/>
        <end position="233"/>
    </location>
</feature>
<feature type="transmembrane region" description="Helical; Anchor for type IV membrane protein" evidence="3">
    <location>
        <begin position="234"/>
        <end position="254"/>
    </location>
</feature>
<feature type="domain" description="t-SNARE coiled-coil homology" evidence="4">
    <location>
        <begin position="162"/>
        <end position="224"/>
    </location>
</feature>
<feature type="region of interest" description="Disordered" evidence="5">
    <location>
        <begin position="103"/>
        <end position="138"/>
    </location>
</feature>
<feature type="coiled-coil region" evidence="3">
    <location>
        <begin position="46"/>
        <end position="72"/>
    </location>
</feature>